<name>RS13_HELP2</name>
<feature type="chain" id="PRO_1000141269" description="Small ribosomal subunit protein uS13">
    <location>
        <begin position="1"/>
        <end position="120"/>
    </location>
</feature>
<feature type="region of interest" description="Disordered" evidence="2">
    <location>
        <begin position="93"/>
        <end position="120"/>
    </location>
</feature>
<feature type="compositionally biased region" description="Basic residues" evidence="2">
    <location>
        <begin position="107"/>
        <end position="120"/>
    </location>
</feature>
<organism>
    <name type="scientific">Helicobacter pylori (strain P12)</name>
    <dbReference type="NCBI Taxonomy" id="570508"/>
    <lineage>
        <taxon>Bacteria</taxon>
        <taxon>Pseudomonadati</taxon>
        <taxon>Campylobacterota</taxon>
        <taxon>Epsilonproteobacteria</taxon>
        <taxon>Campylobacterales</taxon>
        <taxon>Helicobacteraceae</taxon>
        <taxon>Helicobacter</taxon>
    </lineage>
</organism>
<reference key="1">
    <citation type="submission" date="2008-10" db="EMBL/GenBank/DDBJ databases">
        <title>The complete genome sequence of Helicobacter pylori strain P12.</title>
        <authorList>
            <person name="Fischer W."/>
            <person name="Windhager L."/>
            <person name="Karnholz A."/>
            <person name="Zeiller M."/>
            <person name="Zimmer R."/>
            <person name="Haas R."/>
        </authorList>
    </citation>
    <scope>NUCLEOTIDE SEQUENCE [LARGE SCALE GENOMIC DNA]</scope>
    <source>
        <strain>P12</strain>
    </source>
</reference>
<gene>
    <name evidence="1" type="primary">rpsM</name>
    <name type="ordered locus">HPP12_1262</name>
</gene>
<comment type="function">
    <text evidence="1">Located at the top of the head of the 30S subunit, it contacts several helices of the 16S rRNA. In the 70S ribosome it contacts the 23S rRNA (bridge B1a) and protein L5 of the 50S subunit (bridge B1b), connecting the 2 subunits; these bridges are implicated in subunit movement. Contacts the tRNAs in the A and P-sites.</text>
</comment>
<comment type="subunit">
    <text evidence="1">Part of the 30S ribosomal subunit. Forms a loose heterodimer with protein S19. Forms two bridges to the 50S subunit in the 70S ribosome.</text>
</comment>
<comment type="similarity">
    <text evidence="1">Belongs to the universal ribosomal protein uS13 family.</text>
</comment>
<accession>B6JND6</accession>
<keyword id="KW-0687">Ribonucleoprotein</keyword>
<keyword id="KW-0689">Ribosomal protein</keyword>
<keyword id="KW-0694">RNA-binding</keyword>
<keyword id="KW-0699">rRNA-binding</keyword>
<keyword id="KW-0820">tRNA-binding</keyword>
<proteinExistence type="inferred from homology"/>
<protein>
    <recommendedName>
        <fullName evidence="1">Small ribosomal subunit protein uS13</fullName>
    </recommendedName>
    <alternativeName>
        <fullName evidence="3">30S ribosomal protein S13</fullName>
    </alternativeName>
</protein>
<evidence type="ECO:0000255" key="1">
    <source>
        <dbReference type="HAMAP-Rule" id="MF_01315"/>
    </source>
</evidence>
<evidence type="ECO:0000256" key="2">
    <source>
        <dbReference type="SAM" id="MobiDB-lite"/>
    </source>
</evidence>
<evidence type="ECO:0000305" key="3"/>
<dbReference type="EMBL" id="CP001217">
    <property type="protein sequence ID" value="ACJ08414.1"/>
    <property type="molecule type" value="Genomic_DNA"/>
</dbReference>
<dbReference type="SMR" id="B6JND6"/>
<dbReference type="KEGG" id="hpp:HPP12_1262"/>
<dbReference type="HOGENOM" id="CLU_103849_1_2_7"/>
<dbReference type="Proteomes" id="UP000008198">
    <property type="component" value="Chromosome"/>
</dbReference>
<dbReference type="GO" id="GO:0005829">
    <property type="term" value="C:cytosol"/>
    <property type="evidence" value="ECO:0007669"/>
    <property type="project" value="TreeGrafter"/>
</dbReference>
<dbReference type="GO" id="GO:0015935">
    <property type="term" value="C:small ribosomal subunit"/>
    <property type="evidence" value="ECO:0007669"/>
    <property type="project" value="TreeGrafter"/>
</dbReference>
<dbReference type="GO" id="GO:0019843">
    <property type="term" value="F:rRNA binding"/>
    <property type="evidence" value="ECO:0007669"/>
    <property type="project" value="UniProtKB-UniRule"/>
</dbReference>
<dbReference type="GO" id="GO:0003735">
    <property type="term" value="F:structural constituent of ribosome"/>
    <property type="evidence" value="ECO:0007669"/>
    <property type="project" value="InterPro"/>
</dbReference>
<dbReference type="GO" id="GO:0000049">
    <property type="term" value="F:tRNA binding"/>
    <property type="evidence" value="ECO:0007669"/>
    <property type="project" value="UniProtKB-UniRule"/>
</dbReference>
<dbReference type="GO" id="GO:0006412">
    <property type="term" value="P:translation"/>
    <property type="evidence" value="ECO:0007669"/>
    <property type="project" value="UniProtKB-UniRule"/>
</dbReference>
<dbReference type="FunFam" id="1.10.8.50:FF:000001">
    <property type="entry name" value="30S ribosomal protein S13"/>
    <property type="match status" value="1"/>
</dbReference>
<dbReference type="FunFam" id="4.10.910.10:FF:000001">
    <property type="entry name" value="30S ribosomal protein S13"/>
    <property type="match status" value="1"/>
</dbReference>
<dbReference type="Gene3D" id="1.10.8.50">
    <property type="match status" value="1"/>
</dbReference>
<dbReference type="Gene3D" id="4.10.910.10">
    <property type="entry name" value="30s ribosomal protein s13, domain 2"/>
    <property type="match status" value="1"/>
</dbReference>
<dbReference type="HAMAP" id="MF_01315">
    <property type="entry name" value="Ribosomal_uS13"/>
    <property type="match status" value="1"/>
</dbReference>
<dbReference type="InterPro" id="IPR027437">
    <property type="entry name" value="Rbsml_uS13_C"/>
</dbReference>
<dbReference type="InterPro" id="IPR001892">
    <property type="entry name" value="Ribosomal_uS13"/>
</dbReference>
<dbReference type="InterPro" id="IPR010979">
    <property type="entry name" value="Ribosomal_uS13-like_H2TH"/>
</dbReference>
<dbReference type="InterPro" id="IPR019980">
    <property type="entry name" value="Ribosomal_uS13_bac-type"/>
</dbReference>
<dbReference type="InterPro" id="IPR018269">
    <property type="entry name" value="Ribosomal_uS13_CS"/>
</dbReference>
<dbReference type="NCBIfam" id="TIGR03631">
    <property type="entry name" value="uS13_bact"/>
    <property type="match status" value="1"/>
</dbReference>
<dbReference type="PANTHER" id="PTHR10871">
    <property type="entry name" value="30S RIBOSOMAL PROTEIN S13/40S RIBOSOMAL PROTEIN S18"/>
    <property type="match status" value="1"/>
</dbReference>
<dbReference type="PANTHER" id="PTHR10871:SF1">
    <property type="entry name" value="SMALL RIBOSOMAL SUBUNIT PROTEIN US13M"/>
    <property type="match status" value="1"/>
</dbReference>
<dbReference type="Pfam" id="PF00416">
    <property type="entry name" value="Ribosomal_S13"/>
    <property type="match status" value="1"/>
</dbReference>
<dbReference type="PIRSF" id="PIRSF002134">
    <property type="entry name" value="Ribosomal_S13"/>
    <property type="match status" value="1"/>
</dbReference>
<dbReference type="SUPFAM" id="SSF46946">
    <property type="entry name" value="S13-like H2TH domain"/>
    <property type="match status" value="1"/>
</dbReference>
<dbReference type="PROSITE" id="PS00646">
    <property type="entry name" value="RIBOSOMAL_S13_1"/>
    <property type="match status" value="1"/>
</dbReference>
<dbReference type="PROSITE" id="PS50159">
    <property type="entry name" value="RIBOSOMAL_S13_2"/>
    <property type="match status" value="1"/>
</dbReference>
<sequence length="120" mass="13575">MARIAGVDLPKKKRVEYALTYIYGIGLKSSREILEAVGISFDKRVHELSEDEVSSIAKKIQQSYLVEGDLRKKVQMDIKSLMDLGNYRGIRHRKGLPVRGQTTKNNARTRKGKKKTVGSK</sequence>